<reference key="1">
    <citation type="journal article" date="2010" name="Zoology">
        <title>Transcriptome analysis of the venom glands of the Chinese wolf spider Lycosa singoriensis.</title>
        <authorList>
            <person name="Zhang Y."/>
            <person name="Chen J."/>
            <person name="Tang X."/>
            <person name="Wang F."/>
            <person name="Jiang L."/>
            <person name="Xiong X."/>
            <person name="Wang M."/>
            <person name="Rong M."/>
            <person name="Liu Z."/>
            <person name="Liang S."/>
        </authorList>
    </citation>
    <scope>NUCLEOTIDE SEQUENCE [LARGE SCALE MRNA]</scope>
    <source>
        <tissue>Venom gland</tissue>
    </source>
</reference>
<keyword id="KW-1015">Disulfide bond</keyword>
<keyword id="KW-0960">Knottin</keyword>
<keyword id="KW-0964">Secreted</keyword>
<keyword id="KW-0732">Signal</keyword>
<keyword id="KW-0800">Toxin</keyword>
<comment type="subcellular location">
    <subcellularLocation>
        <location evidence="1">Secreted</location>
    </subcellularLocation>
</comment>
<comment type="tissue specificity">
    <text>Expressed by the venom gland.</text>
</comment>
<comment type="domain">
    <text evidence="1">The presence of a 'disulfide through disulfide knot' structurally defines this protein as a knottin.</text>
</comment>
<comment type="similarity">
    <text evidence="3">Belongs to the neurotoxin 19 (CSTX) family. 02 (D7) subfamily.</text>
</comment>
<feature type="signal peptide" evidence="2">
    <location>
        <begin position="1"/>
        <end position="20"/>
    </location>
</feature>
<feature type="propeptide" id="PRO_0000401711" evidence="1">
    <location>
        <begin position="21"/>
        <end position="41"/>
    </location>
</feature>
<feature type="chain" id="PRO_0000401712" description="Toxin-like structure LSTX-D9">
    <location>
        <begin position="42"/>
        <end position="106"/>
    </location>
</feature>
<feature type="disulfide bond" evidence="1">
    <location>
        <begin position="45"/>
        <end position="60"/>
    </location>
</feature>
<feature type="disulfide bond" evidence="1">
    <location>
        <begin position="52"/>
        <end position="69"/>
    </location>
</feature>
<feature type="disulfide bond" evidence="1">
    <location>
        <begin position="59"/>
        <end position="85"/>
    </location>
</feature>
<feature type="disulfide bond" evidence="1">
    <location>
        <begin position="71"/>
        <end position="83"/>
    </location>
</feature>
<sequence>MMKVLVVVALLLTLIIYSSSDGIDDLEADELVSLMAHEQTRAKACTPRYYDCSHDRHRCCRSSMFKDVCTCFYPEGGHYKEVCTCQQPKHLEYMEKAADKIKNLFG</sequence>
<evidence type="ECO:0000250" key="1"/>
<evidence type="ECO:0000255" key="2"/>
<evidence type="ECO:0000305" key="3"/>
<protein>
    <recommendedName>
        <fullName>Toxin-like structure LSTX-D9</fullName>
    </recommendedName>
</protein>
<accession>B6DCU8</accession>
<name>TXZD9_LYCSI</name>
<organism>
    <name type="scientific">Lycosa singoriensis</name>
    <name type="common">Wolf spider</name>
    <name type="synonym">Aranea singoriensis</name>
    <dbReference type="NCBI Taxonomy" id="434756"/>
    <lineage>
        <taxon>Eukaryota</taxon>
        <taxon>Metazoa</taxon>
        <taxon>Ecdysozoa</taxon>
        <taxon>Arthropoda</taxon>
        <taxon>Chelicerata</taxon>
        <taxon>Arachnida</taxon>
        <taxon>Araneae</taxon>
        <taxon>Araneomorphae</taxon>
        <taxon>Entelegynae</taxon>
        <taxon>Lycosoidea</taxon>
        <taxon>Lycosidae</taxon>
        <taxon>Lycosa</taxon>
    </lineage>
</organism>
<proteinExistence type="evidence at transcript level"/>
<dbReference type="EMBL" id="EU926032">
    <property type="protein sequence ID" value="ACI41364.1"/>
    <property type="molecule type" value="mRNA"/>
</dbReference>
<dbReference type="EMBL" id="FM864036">
    <property type="protein sequence ID" value="CAS03633.1"/>
    <property type="molecule type" value="mRNA"/>
</dbReference>
<dbReference type="SMR" id="B6DCU8"/>
<dbReference type="ArachnoServer" id="AS001828">
    <property type="toxin name" value="U3-lycotoxin-Ls1aa"/>
</dbReference>
<dbReference type="GO" id="GO:0005576">
    <property type="term" value="C:extracellular region"/>
    <property type="evidence" value="ECO:0007669"/>
    <property type="project" value="UniProtKB-SubCell"/>
</dbReference>
<dbReference type="GO" id="GO:0090729">
    <property type="term" value="F:toxin activity"/>
    <property type="evidence" value="ECO:0007669"/>
    <property type="project" value="UniProtKB-KW"/>
</dbReference>
<dbReference type="InterPro" id="IPR019553">
    <property type="entry name" value="Spider_toxin_CSTX_knottin"/>
</dbReference>
<dbReference type="InterPro" id="IPR011142">
    <property type="entry name" value="Spider_toxin_CSTX_Knottin_CS"/>
</dbReference>
<dbReference type="Pfam" id="PF10530">
    <property type="entry name" value="Toxin_35"/>
    <property type="match status" value="1"/>
</dbReference>
<dbReference type="PROSITE" id="PS60029">
    <property type="entry name" value="SPIDER_CSTX"/>
    <property type="match status" value="1"/>
</dbReference>